<name>RL19_MACFA</name>
<feature type="chain" id="PRO_0000131170" description="Large ribosomal subunit protein eL19">
    <location>
        <begin position="1"/>
        <end position="196"/>
    </location>
</feature>
<feature type="region of interest" description="Disordered" evidence="3">
    <location>
        <begin position="157"/>
        <end position="176"/>
    </location>
</feature>
<feature type="compositionally biased region" description="Basic and acidic residues" evidence="3">
    <location>
        <begin position="159"/>
        <end position="176"/>
    </location>
</feature>
<feature type="modified residue" description="Citrulline" evidence="2">
    <location>
        <position position="5"/>
    </location>
</feature>
<feature type="modified residue" description="Phosphoserine" evidence="1">
    <location>
        <position position="13"/>
    </location>
</feature>
<feature type="modified residue" description="Citrulline" evidence="2">
    <location>
        <position position="16"/>
    </location>
</feature>
<feature type="modified residue" description="Citrulline" evidence="2">
    <location>
        <position position="38"/>
    </location>
</feature>
<feature type="modified residue" description="Phosphoserine" evidence="1">
    <location>
        <position position="164"/>
    </location>
</feature>
<feature type="modified residue" description="Phosphothreonine" evidence="1">
    <location>
        <position position="187"/>
    </location>
</feature>
<feature type="cross-link" description="Glycyl lysine isopeptide (Lys-Gly) (interchain with G-Cter in SUMO1)" evidence="1">
    <location>
        <position position="181"/>
    </location>
</feature>
<keyword id="KW-0164">Citrullination</keyword>
<keyword id="KW-0963">Cytoplasm</keyword>
<keyword id="KW-1017">Isopeptide bond</keyword>
<keyword id="KW-0597">Phosphoprotein</keyword>
<keyword id="KW-1185">Reference proteome</keyword>
<keyword id="KW-0687">Ribonucleoprotein</keyword>
<keyword id="KW-0689">Ribosomal protein</keyword>
<keyword id="KW-0832">Ubl conjugation</keyword>
<comment type="function">
    <text evidence="1">Component of the large ribosomal subunit. The ribosome is a large ribonucleoprotein complex responsible for the synthesis of proteins in the cell.</text>
</comment>
<comment type="subunit">
    <text evidence="1">Component of the large ribosomal subunit.</text>
</comment>
<comment type="subcellular location">
    <subcellularLocation>
        <location evidence="1">Cytoplasm</location>
    </subcellularLocation>
</comment>
<comment type="PTM">
    <text evidence="2">Citrullinated by PADI4.</text>
</comment>
<comment type="similarity">
    <text evidence="4">Belongs to the eukaryotic ribosomal protein eL19 family.</text>
</comment>
<comment type="sequence caution" evidence="4">
    <conflict type="frameshift">
        <sequence resource="EMBL-CDS" id="BAC21651"/>
    </conflict>
</comment>
<accession>Q8HXN9</accession>
<accession>Q4R556</accession>
<reference key="1">
    <citation type="submission" date="2002-10" db="EMBL/GenBank/DDBJ databases">
        <title>Isolation of full-length cDNA clones from macaque brain cDNA libraries.</title>
        <authorList>
            <person name="Osada N."/>
            <person name="Hida M."/>
            <person name="Kusuda J."/>
            <person name="Tanuma R."/>
            <person name="Iseki K."/>
            <person name="Hirata M."/>
            <person name="Suto Y."/>
            <person name="Hirai M."/>
            <person name="Terao K."/>
            <person name="Suzuki Y."/>
            <person name="Sugano S."/>
            <person name="Hashimoto K."/>
        </authorList>
    </citation>
    <scope>NUCLEOTIDE SEQUENCE [LARGE SCALE MRNA]</scope>
    <source>
        <tissue>Brain stem</tissue>
    </source>
</reference>
<reference key="2">
    <citation type="submission" date="2005-06" db="EMBL/GenBank/DDBJ databases">
        <title>DNA sequences of macaque genes expressed in brain or testis and its evolutionary implications.</title>
        <authorList>
            <consortium name="International consortium for macaque cDNA sequencing and analysis"/>
        </authorList>
    </citation>
    <scope>NUCLEOTIDE SEQUENCE [LARGE SCALE MRNA]</scope>
    <source>
        <tissue>Brain cortex</tissue>
    </source>
</reference>
<protein>
    <recommendedName>
        <fullName evidence="4">Large ribosomal subunit protein eL19</fullName>
    </recommendedName>
    <alternativeName>
        <fullName>60S ribosomal protein L19</fullName>
    </alternativeName>
</protein>
<dbReference type="EMBL" id="AB093677">
    <property type="protein sequence ID" value="BAC21651.1"/>
    <property type="status" value="ALT_FRAME"/>
    <property type="molecule type" value="mRNA"/>
</dbReference>
<dbReference type="EMBL" id="AB169688">
    <property type="protein sequence ID" value="BAE01769.1"/>
    <property type="molecule type" value="mRNA"/>
</dbReference>
<dbReference type="RefSeq" id="XP_005584063.1">
    <property type="nucleotide sequence ID" value="XM_005584006.4"/>
</dbReference>
<dbReference type="SMR" id="Q8HXN9"/>
<dbReference type="STRING" id="9541.ENSMFAP00000005614"/>
<dbReference type="Ensembl" id="ENSMFAT00000035748.2">
    <property type="protein sequence ID" value="ENSMFAP00000009649.2"/>
    <property type="gene ID" value="ENSMFAG00000035226.2"/>
</dbReference>
<dbReference type="GeneID" id="101926814"/>
<dbReference type="KEGG" id="mcf:101926814"/>
<dbReference type="CTD" id="6143"/>
<dbReference type="eggNOG" id="KOG1696">
    <property type="taxonomic scope" value="Eukaryota"/>
</dbReference>
<dbReference type="GeneTree" id="ENSGT00390000012628"/>
<dbReference type="OrthoDB" id="16300at314294"/>
<dbReference type="Proteomes" id="UP000233100">
    <property type="component" value="Chromosome 16"/>
</dbReference>
<dbReference type="Bgee" id="ENSMFAG00000035226">
    <property type="expression patterns" value="Expressed in lymph node and 13 other cell types or tissues"/>
</dbReference>
<dbReference type="GO" id="GO:0022625">
    <property type="term" value="C:cytosolic large ribosomal subunit"/>
    <property type="evidence" value="ECO:0007669"/>
    <property type="project" value="InterPro"/>
</dbReference>
<dbReference type="GO" id="GO:0003723">
    <property type="term" value="F:RNA binding"/>
    <property type="evidence" value="ECO:0007669"/>
    <property type="project" value="InterPro"/>
</dbReference>
<dbReference type="GO" id="GO:0003735">
    <property type="term" value="F:structural constituent of ribosome"/>
    <property type="evidence" value="ECO:0007669"/>
    <property type="project" value="InterPro"/>
</dbReference>
<dbReference type="GO" id="GO:0006412">
    <property type="term" value="P:translation"/>
    <property type="evidence" value="ECO:0007669"/>
    <property type="project" value="InterPro"/>
</dbReference>
<dbReference type="CDD" id="cd01417">
    <property type="entry name" value="Ribosomal_L19e_E"/>
    <property type="match status" value="1"/>
</dbReference>
<dbReference type="FunFam" id="1.10.1200.240:FF:000001">
    <property type="entry name" value="Ribosomal protein L19"/>
    <property type="match status" value="1"/>
</dbReference>
<dbReference type="FunFam" id="1.10.1650.10:FF:000001">
    <property type="entry name" value="Ribosomal protein L19"/>
    <property type="match status" value="1"/>
</dbReference>
<dbReference type="Gene3D" id="1.10.1200.240">
    <property type="match status" value="1"/>
</dbReference>
<dbReference type="Gene3D" id="1.10.1650.10">
    <property type="match status" value="1"/>
</dbReference>
<dbReference type="HAMAP" id="MF_01475">
    <property type="entry name" value="Ribosomal_eL19"/>
    <property type="match status" value="1"/>
</dbReference>
<dbReference type="InterPro" id="IPR035970">
    <property type="entry name" value="60S_ribosomal_eL19_sf"/>
</dbReference>
<dbReference type="InterPro" id="IPR039547">
    <property type="entry name" value="Ribosomal_eL19"/>
</dbReference>
<dbReference type="InterPro" id="IPR023638">
    <property type="entry name" value="Ribosomal_eL19_CS"/>
</dbReference>
<dbReference type="InterPro" id="IPR000196">
    <property type="entry name" value="Ribosomal_eL19_dom"/>
</dbReference>
<dbReference type="InterPro" id="IPR015972">
    <property type="entry name" value="Ribosomal_eL19_dom1"/>
</dbReference>
<dbReference type="InterPro" id="IPR033935">
    <property type="entry name" value="Ribosomal_eL19_euk"/>
</dbReference>
<dbReference type="NCBIfam" id="NF006343">
    <property type="entry name" value="PRK08570.1"/>
    <property type="match status" value="1"/>
</dbReference>
<dbReference type="PANTHER" id="PTHR10722">
    <property type="entry name" value="60S RIBOSOMAL PROTEIN L19"/>
    <property type="match status" value="1"/>
</dbReference>
<dbReference type="Pfam" id="PF01280">
    <property type="entry name" value="Ribosomal_L19e"/>
    <property type="match status" value="1"/>
</dbReference>
<dbReference type="Pfam" id="PF25476">
    <property type="entry name" value="Ribosomal_L19e_C"/>
    <property type="match status" value="1"/>
</dbReference>
<dbReference type="SMART" id="SM01416">
    <property type="entry name" value="Ribosomal_L19e"/>
    <property type="match status" value="1"/>
</dbReference>
<dbReference type="SUPFAM" id="SSF48140">
    <property type="entry name" value="Ribosomal protein L19 (L19e)"/>
    <property type="match status" value="1"/>
</dbReference>
<dbReference type="PROSITE" id="PS00526">
    <property type="entry name" value="RIBOSOMAL_L19E"/>
    <property type="match status" value="1"/>
</dbReference>
<sequence length="196" mass="23466">MSMLRLQKRLASSVLRCGKKKVWLDPNETNEIANANSRQQIRKLIKDGLIIRKPVTVHSRARCRKNTLARRKGRHMGIGKRKGTANARMPEKVTWMRRMRILRRLLRRYRESKKIDRHMYHSLYLKVKGNVFKNKRILMEHIHKLKADKARKKLLADQAEARRSKTKEARKRREERLQAKKEEIIKTLSKEEETKK</sequence>
<proteinExistence type="evidence at transcript level"/>
<organism>
    <name type="scientific">Macaca fascicularis</name>
    <name type="common">Crab-eating macaque</name>
    <name type="synonym">Cynomolgus monkey</name>
    <dbReference type="NCBI Taxonomy" id="9541"/>
    <lineage>
        <taxon>Eukaryota</taxon>
        <taxon>Metazoa</taxon>
        <taxon>Chordata</taxon>
        <taxon>Craniata</taxon>
        <taxon>Vertebrata</taxon>
        <taxon>Euteleostomi</taxon>
        <taxon>Mammalia</taxon>
        <taxon>Eutheria</taxon>
        <taxon>Euarchontoglires</taxon>
        <taxon>Primates</taxon>
        <taxon>Haplorrhini</taxon>
        <taxon>Catarrhini</taxon>
        <taxon>Cercopithecidae</taxon>
        <taxon>Cercopithecinae</taxon>
        <taxon>Macaca</taxon>
    </lineage>
</organism>
<gene>
    <name type="primary">RPL19</name>
    <name type="ORF">QbsB-11252</name>
    <name type="ORF">QccE-18201</name>
</gene>
<evidence type="ECO:0000250" key="1">
    <source>
        <dbReference type="UniProtKB" id="P84098"/>
    </source>
</evidence>
<evidence type="ECO:0000250" key="2">
    <source>
        <dbReference type="UniProtKB" id="P84099"/>
    </source>
</evidence>
<evidence type="ECO:0000256" key="3">
    <source>
        <dbReference type="SAM" id="MobiDB-lite"/>
    </source>
</evidence>
<evidence type="ECO:0000305" key="4"/>